<reference key="1">
    <citation type="journal article" date="2005" name="PLoS Genet.">
        <title>Life in hot carbon monoxide: the complete genome sequence of Carboxydothermus hydrogenoformans Z-2901.</title>
        <authorList>
            <person name="Wu M."/>
            <person name="Ren Q."/>
            <person name="Durkin A.S."/>
            <person name="Daugherty S.C."/>
            <person name="Brinkac L.M."/>
            <person name="Dodson R.J."/>
            <person name="Madupu R."/>
            <person name="Sullivan S.A."/>
            <person name="Kolonay J.F."/>
            <person name="Nelson W.C."/>
            <person name="Tallon L.J."/>
            <person name="Jones K.M."/>
            <person name="Ulrich L.E."/>
            <person name="Gonzalez J.M."/>
            <person name="Zhulin I.B."/>
            <person name="Robb F.T."/>
            <person name="Eisen J.A."/>
        </authorList>
    </citation>
    <scope>NUCLEOTIDE SEQUENCE [LARGE SCALE GENOMIC DNA]</scope>
    <source>
        <strain>ATCC BAA-161 / DSM 6008 / Z-2901</strain>
    </source>
</reference>
<evidence type="ECO:0000255" key="1">
    <source>
        <dbReference type="HAMAP-Rule" id="MF_01364"/>
    </source>
</evidence>
<evidence type="ECO:0000305" key="2"/>
<accession>Q3A9S9</accession>
<name>RS14Z_CARHZ</name>
<dbReference type="EMBL" id="CP000141">
    <property type="protein sequence ID" value="ABB14597.1"/>
    <property type="molecule type" value="Genomic_DNA"/>
</dbReference>
<dbReference type="RefSeq" id="WP_011345178.1">
    <property type="nucleotide sequence ID" value="NC_007503.1"/>
</dbReference>
<dbReference type="SMR" id="Q3A9S9"/>
<dbReference type="FunCoup" id="Q3A9S9">
    <property type="interactions" value="133"/>
</dbReference>
<dbReference type="STRING" id="246194.CHY_2296"/>
<dbReference type="KEGG" id="chy:CHY_2296"/>
<dbReference type="eggNOG" id="COG0199">
    <property type="taxonomic scope" value="Bacteria"/>
</dbReference>
<dbReference type="HOGENOM" id="CLU_139869_3_0_9"/>
<dbReference type="InParanoid" id="Q3A9S9"/>
<dbReference type="OrthoDB" id="9810484at2"/>
<dbReference type="Proteomes" id="UP000002706">
    <property type="component" value="Chromosome"/>
</dbReference>
<dbReference type="GO" id="GO:0005737">
    <property type="term" value="C:cytoplasm"/>
    <property type="evidence" value="ECO:0007669"/>
    <property type="project" value="UniProtKB-ARBA"/>
</dbReference>
<dbReference type="GO" id="GO:0015935">
    <property type="term" value="C:small ribosomal subunit"/>
    <property type="evidence" value="ECO:0007669"/>
    <property type="project" value="TreeGrafter"/>
</dbReference>
<dbReference type="GO" id="GO:0019843">
    <property type="term" value="F:rRNA binding"/>
    <property type="evidence" value="ECO:0007669"/>
    <property type="project" value="UniProtKB-UniRule"/>
</dbReference>
<dbReference type="GO" id="GO:0003735">
    <property type="term" value="F:structural constituent of ribosome"/>
    <property type="evidence" value="ECO:0007669"/>
    <property type="project" value="InterPro"/>
</dbReference>
<dbReference type="GO" id="GO:0008270">
    <property type="term" value="F:zinc ion binding"/>
    <property type="evidence" value="ECO:0007669"/>
    <property type="project" value="UniProtKB-UniRule"/>
</dbReference>
<dbReference type="GO" id="GO:0006412">
    <property type="term" value="P:translation"/>
    <property type="evidence" value="ECO:0007669"/>
    <property type="project" value="UniProtKB-UniRule"/>
</dbReference>
<dbReference type="FunFam" id="4.10.830.10:FF:000001">
    <property type="entry name" value="30S ribosomal protein S14 type Z"/>
    <property type="match status" value="1"/>
</dbReference>
<dbReference type="Gene3D" id="4.10.830.10">
    <property type="entry name" value="30s Ribosomal Protein S14, Chain N"/>
    <property type="match status" value="1"/>
</dbReference>
<dbReference type="HAMAP" id="MF_01364_B">
    <property type="entry name" value="Ribosomal_uS14_2_B"/>
    <property type="match status" value="1"/>
</dbReference>
<dbReference type="InterPro" id="IPR001209">
    <property type="entry name" value="Ribosomal_uS14"/>
</dbReference>
<dbReference type="InterPro" id="IPR023053">
    <property type="entry name" value="Ribosomal_uS14_bact"/>
</dbReference>
<dbReference type="InterPro" id="IPR018271">
    <property type="entry name" value="Ribosomal_uS14_CS"/>
</dbReference>
<dbReference type="InterPro" id="IPR043140">
    <property type="entry name" value="Ribosomal_uS14_sf"/>
</dbReference>
<dbReference type="NCBIfam" id="NF005974">
    <property type="entry name" value="PRK08061.1"/>
    <property type="match status" value="1"/>
</dbReference>
<dbReference type="PANTHER" id="PTHR19836">
    <property type="entry name" value="30S RIBOSOMAL PROTEIN S14"/>
    <property type="match status" value="1"/>
</dbReference>
<dbReference type="PANTHER" id="PTHR19836:SF19">
    <property type="entry name" value="SMALL RIBOSOMAL SUBUNIT PROTEIN US14M"/>
    <property type="match status" value="1"/>
</dbReference>
<dbReference type="Pfam" id="PF00253">
    <property type="entry name" value="Ribosomal_S14"/>
    <property type="match status" value="1"/>
</dbReference>
<dbReference type="SUPFAM" id="SSF57716">
    <property type="entry name" value="Glucocorticoid receptor-like (DNA-binding domain)"/>
    <property type="match status" value="1"/>
</dbReference>
<dbReference type="PROSITE" id="PS00527">
    <property type="entry name" value="RIBOSOMAL_S14"/>
    <property type="match status" value="1"/>
</dbReference>
<feature type="chain" id="PRO_0000269089" description="Small ribosomal subunit protein uS14">
    <location>
        <begin position="1"/>
        <end position="61"/>
    </location>
</feature>
<feature type="binding site" evidence="1">
    <location>
        <position position="24"/>
    </location>
    <ligand>
        <name>Zn(2+)</name>
        <dbReference type="ChEBI" id="CHEBI:29105"/>
    </ligand>
</feature>
<feature type="binding site" evidence="1">
    <location>
        <position position="27"/>
    </location>
    <ligand>
        <name>Zn(2+)</name>
        <dbReference type="ChEBI" id="CHEBI:29105"/>
    </ligand>
</feature>
<feature type="binding site" evidence="1">
    <location>
        <position position="40"/>
    </location>
    <ligand>
        <name>Zn(2+)</name>
        <dbReference type="ChEBI" id="CHEBI:29105"/>
    </ligand>
</feature>
<feature type="binding site" evidence="1">
    <location>
        <position position="43"/>
    </location>
    <ligand>
        <name>Zn(2+)</name>
        <dbReference type="ChEBI" id="CHEBI:29105"/>
    </ligand>
</feature>
<comment type="function">
    <text evidence="1">Binds 16S rRNA, required for the assembly of 30S particles and may also be responsible for determining the conformation of the 16S rRNA at the A site.</text>
</comment>
<comment type="cofactor">
    <cofactor evidence="1">
        <name>Zn(2+)</name>
        <dbReference type="ChEBI" id="CHEBI:29105"/>
    </cofactor>
    <text evidence="1">Binds 1 zinc ion per subunit.</text>
</comment>
<comment type="subunit">
    <text evidence="1">Part of the 30S ribosomal subunit. Contacts proteins S3 and S10.</text>
</comment>
<comment type="similarity">
    <text evidence="1">Belongs to the universal ribosomal protein uS14 family. Zinc-binding uS14 subfamily.</text>
</comment>
<sequence>MAKKSMIAKAQRPPKFKVRKYNRCKICGRPRAYLRDFGMCRICFRKLAHQGEIPGVKKASW</sequence>
<gene>
    <name evidence="1" type="primary">rpsZ</name>
    <name evidence="1" type="synonym">rpsN</name>
    <name type="ordered locus">CHY_2296</name>
</gene>
<proteinExistence type="inferred from homology"/>
<organism>
    <name type="scientific">Carboxydothermus hydrogenoformans (strain ATCC BAA-161 / DSM 6008 / Z-2901)</name>
    <dbReference type="NCBI Taxonomy" id="246194"/>
    <lineage>
        <taxon>Bacteria</taxon>
        <taxon>Bacillati</taxon>
        <taxon>Bacillota</taxon>
        <taxon>Clostridia</taxon>
        <taxon>Thermoanaerobacterales</taxon>
        <taxon>Thermoanaerobacteraceae</taxon>
        <taxon>Carboxydothermus</taxon>
    </lineage>
</organism>
<protein>
    <recommendedName>
        <fullName evidence="1">Small ribosomal subunit protein uS14</fullName>
    </recommendedName>
    <alternativeName>
        <fullName evidence="2">30S ribosomal protein S14 type Z</fullName>
    </alternativeName>
</protein>
<keyword id="KW-0479">Metal-binding</keyword>
<keyword id="KW-1185">Reference proteome</keyword>
<keyword id="KW-0687">Ribonucleoprotein</keyword>
<keyword id="KW-0689">Ribosomal protein</keyword>
<keyword id="KW-0694">RNA-binding</keyword>
<keyword id="KW-0699">rRNA-binding</keyword>
<keyword id="KW-0862">Zinc</keyword>